<protein>
    <recommendedName>
        <fullName>B2 protein</fullName>
    </recommendedName>
</protein>
<sequence length="207" mass="23742">MIDQEESNFNFNFNQPQQPQQQQFHGKSVKKNKNKNNNNNSESGNKNGGENKNGVEKRFKTLPPAESLPRNETVGGYIFVCNNDTMQENLKRQLFGLPPRYRDSVRAITPGLPLFLYNYSTHQLHGVFEAASFGGTNIDPTAWEDKKNQGESRFPAQVRVMTRKICEPLEEDSFRPILHHYDGPKFRLELNIPEAISLLDIFEETKA</sequence>
<accession>P37707</accession>
<organism>
    <name type="scientific">Daucus carota</name>
    <name type="common">Wild carrot</name>
    <dbReference type="NCBI Taxonomy" id="4039"/>
    <lineage>
        <taxon>Eukaryota</taxon>
        <taxon>Viridiplantae</taxon>
        <taxon>Streptophyta</taxon>
        <taxon>Embryophyta</taxon>
        <taxon>Tracheophyta</taxon>
        <taxon>Spermatophyta</taxon>
        <taxon>Magnoliopsida</taxon>
        <taxon>eudicotyledons</taxon>
        <taxon>Gunneridae</taxon>
        <taxon>Pentapetalae</taxon>
        <taxon>asterids</taxon>
        <taxon>campanulids</taxon>
        <taxon>Apiales</taxon>
        <taxon>Apiaceae</taxon>
        <taxon>Apioideae</taxon>
        <taxon>Scandiceae</taxon>
        <taxon>Daucinae</taxon>
        <taxon>Daucus</taxon>
        <taxon>Daucus sect. Daucus</taxon>
    </lineage>
</organism>
<dbReference type="EMBL" id="X72385">
    <property type="protein sequence ID" value="CAA51078.1"/>
    <property type="molecule type" value="mRNA"/>
</dbReference>
<dbReference type="PIR" id="S32124">
    <property type="entry name" value="S32124"/>
</dbReference>
<dbReference type="SMR" id="P37707"/>
<dbReference type="GO" id="GO:0034976">
    <property type="term" value="P:response to endoplasmic reticulum stress"/>
    <property type="evidence" value="ECO:0007669"/>
    <property type="project" value="InterPro"/>
</dbReference>
<dbReference type="Gene3D" id="3.10.590.10">
    <property type="entry name" value="ph1033 like domains"/>
    <property type="match status" value="1"/>
</dbReference>
<dbReference type="InterPro" id="IPR013989">
    <property type="entry name" value="Dev_and_cell_death_domain"/>
</dbReference>
<dbReference type="InterPro" id="IPR044832">
    <property type="entry name" value="NRP-like"/>
</dbReference>
<dbReference type="PANTHER" id="PTHR46034">
    <property type="match status" value="1"/>
</dbReference>
<dbReference type="PANTHER" id="PTHR46034:SF32">
    <property type="entry name" value="DCD DOMAIN-CONTAINING PROTEIN NRP-B"/>
    <property type="match status" value="1"/>
</dbReference>
<dbReference type="Pfam" id="PF10539">
    <property type="entry name" value="Dev_Cell_Death"/>
    <property type="match status" value="1"/>
</dbReference>
<dbReference type="SMART" id="SM00767">
    <property type="entry name" value="DCD"/>
    <property type="match status" value="1"/>
</dbReference>
<dbReference type="PROSITE" id="PS51222">
    <property type="entry name" value="DCD"/>
    <property type="match status" value="1"/>
</dbReference>
<reference key="1">
    <citation type="submission" date="1993-03" db="EMBL/GenBank/DDBJ databases">
        <authorList>
            <person name="Schrader S."/>
            <person name="Kaldenhoff R."/>
            <person name="Richter G."/>
        </authorList>
    </citation>
    <scope>NUCLEOTIDE SEQUENCE [MRNA]</scope>
</reference>
<name>B2_DAUCA</name>
<evidence type="ECO:0000255" key="1">
    <source>
        <dbReference type="PROSITE-ProRule" id="PRU00569"/>
    </source>
</evidence>
<evidence type="ECO:0000256" key="2">
    <source>
        <dbReference type="SAM" id="MobiDB-lite"/>
    </source>
</evidence>
<feature type="chain" id="PRO_0000064786" description="B2 protein">
    <location>
        <begin position="1"/>
        <end position="207"/>
    </location>
</feature>
<feature type="domain" description="DCD" evidence="1">
    <location>
        <begin position="72"/>
        <end position="204"/>
    </location>
</feature>
<feature type="region of interest" description="Disordered" evidence="2">
    <location>
        <begin position="1"/>
        <end position="68"/>
    </location>
</feature>
<feature type="compositionally biased region" description="Low complexity" evidence="2">
    <location>
        <begin position="8"/>
        <end position="26"/>
    </location>
</feature>
<feature type="compositionally biased region" description="Low complexity" evidence="2">
    <location>
        <begin position="35"/>
        <end position="52"/>
    </location>
</feature>
<proteinExistence type="evidence at transcript level"/>